<name>Y2402_VIBVY</name>
<evidence type="ECO:0000255" key="1">
    <source>
        <dbReference type="HAMAP-Rule" id="MF_00676"/>
    </source>
</evidence>
<protein>
    <recommendedName>
        <fullName evidence="1">UPF0260 protein VV2402</fullName>
    </recommendedName>
</protein>
<feature type="chain" id="PRO_0000214598" description="UPF0260 protein VV2402">
    <location>
        <begin position="1"/>
        <end position="145"/>
    </location>
</feature>
<proteinExistence type="inferred from homology"/>
<reference key="1">
    <citation type="journal article" date="2003" name="Genome Res.">
        <title>Comparative genome analysis of Vibrio vulnificus, a marine pathogen.</title>
        <authorList>
            <person name="Chen C.-Y."/>
            <person name="Wu K.-M."/>
            <person name="Chang Y.-C."/>
            <person name="Chang C.-H."/>
            <person name="Tsai H.-C."/>
            <person name="Liao T.-L."/>
            <person name="Liu Y.-M."/>
            <person name="Chen H.-J."/>
            <person name="Shen A.B.-T."/>
            <person name="Li J.-C."/>
            <person name="Su T.-L."/>
            <person name="Shao C.-P."/>
            <person name="Lee C.-T."/>
            <person name="Hor L.-I."/>
            <person name="Tsai S.-F."/>
        </authorList>
    </citation>
    <scope>NUCLEOTIDE SEQUENCE [LARGE SCALE GENOMIC DNA]</scope>
    <source>
        <strain>YJ016</strain>
    </source>
</reference>
<accession>Q7MIW1</accession>
<dbReference type="EMBL" id="BA000037">
    <property type="protein sequence ID" value="BAC95166.1"/>
    <property type="molecule type" value="Genomic_DNA"/>
</dbReference>
<dbReference type="RefSeq" id="WP_011150868.1">
    <property type="nucleotide sequence ID" value="NC_005139.1"/>
</dbReference>
<dbReference type="STRING" id="672.VV93_v1c21060"/>
<dbReference type="KEGG" id="vvy:VV2402"/>
<dbReference type="eggNOG" id="COG2983">
    <property type="taxonomic scope" value="Bacteria"/>
</dbReference>
<dbReference type="HOGENOM" id="CLU_109769_1_0_6"/>
<dbReference type="Proteomes" id="UP000002675">
    <property type="component" value="Chromosome I"/>
</dbReference>
<dbReference type="HAMAP" id="MF_00676">
    <property type="entry name" value="UPF0260"/>
    <property type="match status" value="1"/>
</dbReference>
<dbReference type="InterPro" id="IPR005358">
    <property type="entry name" value="Puta_zinc/iron-chelating_dom"/>
</dbReference>
<dbReference type="InterPro" id="IPR008228">
    <property type="entry name" value="UCP006173"/>
</dbReference>
<dbReference type="NCBIfam" id="NF003501">
    <property type="entry name" value="PRK05170.1-5"/>
    <property type="match status" value="1"/>
</dbReference>
<dbReference type="NCBIfam" id="NF003503">
    <property type="entry name" value="PRK05170.2-1"/>
    <property type="match status" value="1"/>
</dbReference>
<dbReference type="NCBIfam" id="NF003507">
    <property type="entry name" value="PRK05170.2-5"/>
    <property type="match status" value="1"/>
</dbReference>
<dbReference type="PANTHER" id="PTHR37421">
    <property type="entry name" value="UPF0260 PROTEIN YCGN"/>
    <property type="match status" value="1"/>
</dbReference>
<dbReference type="PANTHER" id="PTHR37421:SF1">
    <property type="entry name" value="UPF0260 PROTEIN YCGN"/>
    <property type="match status" value="1"/>
</dbReference>
<dbReference type="Pfam" id="PF03692">
    <property type="entry name" value="CxxCxxCC"/>
    <property type="match status" value="1"/>
</dbReference>
<dbReference type="PIRSF" id="PIRSF006173">
    <property type="entry name" value="UCP006173"/>
    <property type="match status" value="1"/>
</dbReference>
<gene>
    <name type="ordered locus">VV2402</name>
</gene>
<sequence>MSTPFWQSKTLQEMTEQEWESLCDGCGKCCLHKLMDEETDEVFYTNVACSWLNSKTCSCKDYPNRFSSGENCLKLTQDKIAEFHWLPRTCAYRRLSENQPLPEWHPLITGSKSAMHAAGQSIRNRVVYEIDVKDWEDHVIENPDY</sequence>
<comment type="similarity">
    <text evidence="1">Belongs to the UPF0260 family.</text>
</comment>
<organism>
    <name type="scientific">Vibrio vulnificus (strain YJ016)</name>
    <dbReference type="NCBI Taxonomy" id="196600"/>
    <lineage>
        <taxon>Bacteria</taxon>
        <taxon>Pseudomonadati</taxon>
        <taxon>Pseudomonadota</taxon>
        <taxon>Gammaproteobacteria</taxon>
        <taxon>Vibrionales</taxon>
        <taxon>Vibrionaceae</taxon>
        <taxon>Vibrio</taxon>
    </lineage>
</organism>